<accession>A2QGS5</accession>
<keyword id="KW-0012">Acyltransferase</keyword>
<keyword id="KW-0028">Amino-acid biosynthesis</keyword>
<keyword id="KW-0055">Arginine biosynthesis</keyword>
<keyword id="KW-0068">Autocatalytic cleavage</keyword>
<keyword id="KW-0496">Mitochondrion</keyword>
<keyword id="KW-0511">Multifunctional enzyme</keyword>
<keyword id="KW-1185">Reference proteome</keyword>
<keyword id="KW-0808">Transferase</keyword>
<dbReference type="EC" id="2.3.1.35" evidence="1"/>
<dbReference type="EC" id="2.3.1.1" evidence="1"/>
<dbReference type="EMBL" id="AM270053">
    <property type="protein sequence ID" value="CAK47872.1"/>
    <property type="molecule type" value="Genomic_DNA"/>
</dbReference>
<dbReference type="RefSeq" id="XP_001390314.2">
    <property type="nucleotide sequence ID" value="XM_001390277.2"/>
</dbReference>
<dbReference type="SMR" id="A2QGS5"/>
<dbReference type="MEROPS" id="T05.001"/>
<dbReference type="EnsemblFungi" id="CAK47872">
    <property type="protein sequence ID" value="CAK47872"/>
    <property type="gene ID" value="An03g04330"/>
</dbReference>
<dbReference type="GeneID" id="4980422"/>
<dbReference type="KEGG" id="ang:An03g04330"/>
<dbReference type="HOGENOM" id="CLU_027172_1_0_1"/>
<dbReference type="UniPathway" id="UPA00068">
    <property type="reaction ID" value="UER00106"/>
</dbReference>
<dbReference type="UniPathway" id="UPA00068">
    <property type="reaction ID" value="UER00111"/>
</dbReference>
<dbReference type="Proteomes" id="UP000006706">
    <property type="component" value="Chromosome 6R"/>
</dbReference>
<dbReference type="GO" id="GO:0005759">
    <property type="term" value="C:mitochondrial matrix"/>
    <property type="evidence" value="ECO:0007669"/>
    <property type="project" value="UniProtKB-SubCell"/>
</dbReference>
<dbReference type="GO" id="GO:0004358">
    <property type="term" value="F:glutamate N-acetyltransferase activity"/>
    <property type="evidence" value="ECO:0007669"/>
    <property type="project" value="UniProtKB-UniRule"/>
</dbReference>
<dbReference type="GO" id="GO:0004042">
    <property type="term" value="F:L-glutamate N-acetyltransferase activity"/>
    <property type="evidence" value="ECO:0007669"/>
    <property type="project" value="UniProtKB-UniRule"/>
</dbReference>
<dbReference type="GO" id="GO:0006526">
    <property type="term" value="P:L-arginine biosynthetic process"/>
    <property type="evidence" value="ECO:0007669"/>
    <property type="project" value="UniProtKB-UniRule"/>
</dbReference>
<dbReference type="GO" id="GO:0006592">
    <property type="term" value="P:ornithine biosynthetic process"/>
    <property type="evidence" value="ECO:0007669"/>
    <property type="project" value="EnsemblFungi"/>
</dbReference>
<dbReference type="CDD" id="cd02152">
    <property type="entry name" value="OAT"/>
    <property type="match status" value="1"/>
</dbReference>
<dbReference type="FunFam" id="3.60.70.12:FF:000001">
    <property type="entry name" value="Arginine biosynthesis bifunctional protein ArgJ, chloroplastic"/>
    <property type="match status" value="1"/>
</dbReference>
<dbReference type="FunFam" id="3.10.20.340:FF:000002">
    <property type="entry name" value="Arginine biosynthesis bifunctional protein ArgJ, mitochondrial"/>
    <property type="match status" value="1"/>
</dbReference>
<dbReference type="FunFam" id="3.30.2330.10:FF:000001">
    <property type="entry name" value="Arginine biosynthesis bifunctional protein ArgJ, mitochondrial"/>
    <property type="match status" value="1"/>
</dbReference>
<dbReference type="Gene3D" id="3.30.2330.10">
    <property type="entry name" value="arginine biosynthesis bifunctional protein suprefamily"/>
    <property type="match status" value="1"/>
</dbReference>
<dbReference type="Gene3D" id="3.10.20.340">
    <property type="entry name" value="ArgJ beta chain, C-terminal domain"/>
    <property type="match status" value="1"/>
</dbReference>
<dbReference type="Gene3D" id="3.60.70.12">
    <property type="entry name" value="L-amino peptidase D-ALA esterase/amidase"/>
    <property type="match status" value="1"/>
</dbReference>
<dbReference type="HAMAP" id="MF_01106">
    <property type="entry name" value="ArgJ"/>
    <property type="match status" value="1"/>
</dbReference>
<dbReference type="InterPro" id="IPR002813">
    <property type="entry name" value="Arg_biosynth_ArgJ"/>
</dbReference>
<dbReference type="InterPro" id="IPR016117">
    <property type="entry name" value="ArgJ-like_dom_sf"/>
</dbReference>
<dbReference type="InterPro" id="IPR042195">
    <property type="entry name" value="ArgJ_beta_C"/>
</dbReference>
<dbReference type="NCBIfam" id="TIGR00120">
    <property type="entry name" value="ArgJ"/>
    <property type="match status" value="1"/>
</dbReference>
<dbReference type="NCBIfam" id="NF003802">
    <property type="entry name" value="PRK05388.1"/>
    <property type="match status" value="1"/>
</dbReference>
<dbReference type="PANTHER" id="PTHR23100">
    <property type="entry name" value="ARGININE BIOSYNTHESIS BIFUNCTIONAL PROTEIN ARGJ"/>
    <property type="match status" value="1"/>
</dbReference>
<dbReference type="PANTHER" id="PTHR23100:SF0">
    <property type="entry name" value="ARGININE BIOSYNTHESIS BIFUNCTIONAL PROTEIN ARGJ, MITOCHONDRIAL"/>
    <property type="match status" value="1"/>
</dbReference>
<dbReference type="Pfam" id="PF01960">
    <property type="entry name" value="ArgJ"/>
    <property type="match status" value="1"/>
</dbReference>
<dbReference type="SUPFAM" id="SSF56266">
    <property type="entry name" value="DmpA/ArgJ-like"/>
    <property type="match status" value="1"/>
</dbReference>
<proteinExistence type="inferred from homology"/>
<gene>
    <name type="ORF">An03g04330</name>
</gene>
<comment type="function">
    <text evidence="1">Catalyzes two activities which are involved in the cyclic version of arginine biosynthesis: the synthesis of acetylglutamate from glutamate and acetyl-CoA, and of ornithine by transacetylation between acetylornithine and glutamate.</text>
</comment>
<comment type="catalytic activity">
    <reaction evidence="1">
        <text>N(2)-acetyl-L-ornithine + L-glutamate = N-acetyl-L-glutamate + L-ornithine</text>
        <dbReference type="Rhea" id="RHEA:15349"/>
        <dbReference type="ChEBI" id="CHEBI:29985"/>
        <dbReference type="ChEBI" id="CHEBI:44337"/>
        <dbReference type="ChEBI" id="CHEBI:46911"/>
        <dbReference type="ChEBI" id="CHEBI:57805"/>
        <dbReference type="EC" id="2.3.1.35"/>
    </reaction>
</comment>
<comment type="catalytic activity">
    <reaction evidence="1">
        <text>L-glutamate + acetyl-CoA = N-acetyl-L-glutamate + CoA + H(+)</text>
        <dbReference type="Rhea" id="RHEA:24292"/>
        <dbReference type="ChEBI" id="CHEBI:15378"/>
        <dbReference type="ChEBI" id="CHEBI:29985"/>
        <dbReference type="ChEBI" id="CHEBI:44337"/>
        <dbReference type="ChEBI" id="CHEBI:57287"/>
        <dbReference type="ChEBI" id="CHEBI:57288"/>
        <dbReference type="EC" id="2.3.1.1"/>
    </reaction>
</comment>
<comment type="pathway">
    <text evidence="1">Amino-acid biosynthesis; L-arginine biosynthesis; L-ornithine and N-acetyl-L-glutamate from L-glutamate and N(2)-acetyl-L-ornithine (cyclic): step 1/1.</text>
</comment>
<comment type="pathway">
    <text evidence="1">Amino-acid biosynthesis; L-arginine biosynthesis; N(2)-acetyl-L-ornithine from L-glutamate: step 1/4.</text>
</comment>
<comment type="subunit">
    <text evidence="1">Heterodimer of an alpha and a beta chain.</text>
</comment>
<comment type="subcellular location">
    <subcellularLocation>
        <location evidence="1">Mitochondrion matrix</location>
    </subcellularLocation>
</comment>
<comment type="PTM">
    <text evidence="1">The alpha and beta chains are autoproteolytically processed from a single precursor protein within the mitochondrion.</text>
</comment>
<comment type="miscellaneous">
    <text evidence="1">This protein may be expected to contain an N-terminal transit peptide but none has been predicted.</text>
</comment>
<comment type="similarity">
    <text evidence="1">Belongs to the ArgJ family.</text>
</comment>
<protein>
    <recommendedName>
        <fullName evidence="1">Arginine biosynthesis bifunctional protein ArgJ, mitochondrial</fullName>
    </recommendedName>
    <domain>
        <recommendedName>
            <fullName evidence="1">Glutamate N-acetyltransferase</fullName>
            <shortName evidence="1">GAT</shortName>
            <ecNumber evidence="1">2.3.1.35</ecNumber>
        </recommendedName>
        <alternativeName>
            <fullName evidence="1">Ornithine acetyltransferase</fullName>
            <shortName evidence="1">OATase</shortName>
        </alternativeName>
        <alternativeName>
            <fullName evidence="1">Ornithine transacetylase</fullName>
        </alternativeName>
    </domain>
    <domain>
        <recommendedName>
            <fullName evidence="1">Amino-acid acetyltransferase</fullName>
            <ecNumber evidence="1">2.3.1.1</ecNumber>
        </recommendedName>
        <alternativeName>
            <fullName evidence="1">N-acetylglutamate synthase</fullName>
            <shortName evidence="1">AGS</shortName>
        </alternativeName>
    </domain>
    <component>
        <recommendedName>
            <fullName evidence="1">Arginine biosynthesis bifunctional protein ArgJ alpha chain</fullName>
        </recommendedName>
    </component>
    <component>
        <recommendedName>
            <fullName evidence="1">Arginine biosynthesis bifunctional protein ArgJ beta chain</fullName>
        </recommendedName>
    </component>
</protein>
<evidence type="ECO:0000255" key="1">
    <source>
        <dbReference type="HAMAP-Rule" id="MF_03124"/>
    </source>
</evidence>
<sequence>MATFARMVKGQVRYYSAPLDMAIPASKQKYIPASGTYPKGFSVSGTHVGVKASNTRFPDLALISSETPCSAAAVFTTNKFQAAPVQASKNTLKATQGEGIRSVVINSGCANAVTGKGGLEDAVSMGAKVDECNGLAQPSTLVMSTGVIGQRLPISKILDKIPTAHSTLSSTHDSWLTTARAICTTDTFPKLLSQTFTLPSSPNRTYRLAGMTKGAGMIHPNMATLLGVLCTDAPIASSALQPLLKHAVSRSFNSISVDGDTSTNDTIAILANGAAGGAPITSTSSADYTAMQNVLTSFAQSLSQLVVRDGEGATKFVTVRVQNSPDYESARLIASTIARSPLVKTALYGKDANWGRILCAIGYTQGVAEGTVVPERTSVSFKPVDGSAELKLLVNGEPEQVDEDRAAVILQEEDLEIVVDLGGGEKGEKGLGGEEAIYWFCDFSHEYVTINGDYRT</sequence>
<organism>
    <name type="scientific">Aspergillus niger (strain ATCC MYA-4892 / CBS 513.88 / FGSC A1513)</name>
    <dbReference type="NCBI Taxonomy" id="425011"/>
    <lineage>
        <taxon>Eukaryota</taxon>
        <taxon>Fungi</taxon>
        <taxon>Dikarya</taxon>
        <taxon>Ascomycota</taxon>
        <taxon>Pezizomycotina</taxon>
        <taxon>Eurotiomycetes</taxon>
        <taxon>Eurotiomycetidae</taxon>
        <taxon>Eurotiales</taxon>
        <taxon>Aspergillaceae</taxon>
        <taxon>Aspergillus</taxon>
        <taxon>Aspergillus subgen. Circumdati</taxon>
    </lineage>
</organism>
<reference key="1">
    <citation type="journal article" date="2007" name="Nat. Biotechnol.">
        <title>Genome sequencing and analysis of the versatile cell factory Aspergillus niger CBS 513.88.</title>
        <authorList>
            <person name="Pel H.J."/>
            <person name="de Winde J.H."/>
            <person name="Archer D.B."/>
            <person name="Dyer P.S."/>
            <person name="Hofmann G."/>
            <person name="Schaap P.J."/>
            <person name="Turner G."/>
            <person name="de Vries R.P."/>
            <person name="Albang R."/>
            <person name="Albermann K."/>
            <person name="Andersen M.R."/>
            <person name="Bendtsen J.D."/>
            <person name="Benen J.A.E."/>
            <person name="van den Berg M."/>
            <person name="Breestraat S."/>
            <person name="Caddick M.X."/>
            <person name="Contreras R."/>
            <person name="Cornell M."/>
            <person name="Coutinho P.M."/>
            <person name="Danchin E.G.J."/>
            <person name="Debets A.J.M."/>
            <person name="Dekker P."/>
            <person name="van Dijck P.W.M."/>
            <person name="van Dijk A."/>
            <person name="Dijkhuizen L."/>
            <person name="Driessen A.J.M."/>
            <person name="d'Enfert C."/>
            <person name="Geysens S."/>
            <person name="Goosen C."/>
            <person name="Groot G.S.P."/>
            <person name="de Groot P.W.J."/>
            <person name="Guillemette T."/>
            <person name="Henrissat B."/>
            <person name="Herweijer M."/>
            <person name="van den Hombergh J.P.T.W."/>
            <person name="van den Hondel C.A.M.J.J."/>
            <person name="van der Heijden R.T.J.M."/>
            <person name="van der Kaaij R.M."/>
            <person name="Klis F.M."/>
            <person name="Kools H.J."/>
            <person name="Kubicek C.P."/>
            <person name="van Kuyk P.A."/>
            <person name="Lauber J."/>
            <person name="Lu X."/>
            <person name="van der Maarel M.J.E.C."/>
            <person name="Meulenberg R."/>
            <person name="Menke H."/>
            <person name="Mortimer M.A."/>
            <person name="Nielsen J."/>
            <person name="Oliver S.G."/>
            <person name="Olsthoorn M."/>
            <person name="Pal K."/>
            <person name="van Peij N.N.M.E."/>
            <person name="Ram A.F.J."/>
            <person name="Rinas U."/>
            <person name="Roubos J.A."/>
            <person name="Sagt C.M.J."/>
            <person name="Schmoll M."/>
            <person name="Sun J."/>
            <person name="Ussery D."/>
            <person name="Varga J."/>
            <person name="Vervecken W."/>
            <person name="van de Vondervoort P.J.J."/>
            <person name="Wedler H."/>
            <person name="Woesten H.A.B."/>
            <person name="Zeng A.-P."/>
            <person name="van Ooyen A.J.J."/>
            <person name="Visser J."/>
            <person name="Stam H."/>
        </authorList>
    </citation>
    <scope>NUCLEOTIDE SEQUENCE [LARGE SCALE GENOMIC DNA]</scope>
    <source>
        <strain>ATCC MYA-4892 / CBS 513.88 / FGSC A1513</strain>
    </source>
</reference>
<name>ARGJ_ASPNC</name>
<feature type="chain" id="PRO_0000398020" description="Arginine biosynthesis bifunctional protein ArgJ alpha chain" evidence="1">
    <location>
        <begin position="1"/>
        <end position="223"/>
    </location>
</feature>
<feature type="chain" id="PRO_0000398021" description="Arginine biosynthesis bifunctional protein ArgJ beta chain" evidence="1">
    <location>
        <begin position="224"/>
        <end position="456"/>
    </location>
</feature>
<feature type="active site" description="Nucleophile" evidence="1">
    <location>
        <position position="224"/>
    </location>
</feature>
<feature type="binding site" evidence="1">
    <location>
        <position position="184"/>
    </location>
    <ligand>
        <name>substrate</name>
    </ligand>
</feature>
<feature type="binding site" evidence="1">
    <location>
        <position position="213"/>
    </location>
    <ligand>
        <name>substrate</name>
    </ligand>
</feature>
<feature type="binding site" evidence="1">
    <location>
        <position position="224"/>
    </location>
    <ligand>
        <name>substrate</name>
    </ligand>
</feature>
<feature type="binding site" evidence="1">
    <location>
        <position position="311"/>
    </location>
    <ligand>
        <name>substrate</name>
    </ligand>
</feature>
<feature type="binding site" evidence="1">
    <location>
        <position position="451"/>
    </location>
    <ligand>
        <name>substrate</name>
    </ligand>
</feature>
<feature type="binding site" evidence="1">
    <location>
        <position position="456"/>
    </location>
    <ligand>
        <name>substrate</name>
    </ligand>
</feature>
<feature type="site" description="Involved in the stabilization of negative charge on the oxyanion by the formation of the oxyanion hole" evidence="1">
    <location>
        <position position="145"/>
    </location>
</feature>
<feature type="site" description="Involved in the stabilization of negative charge on the oxyanion by the formation of the oxyanion hole" evidence="1">
    <location>
        <position position="146"/>
    </location>
</feature>
<feature type="site" description="Cleavage; by autolysis" evidence="1">
    <location>
        <begin position="223"/>
        <end position="224"/>
    </location>
</feature>